<evidence type="ECO:0000255" key="1">
    <source>
        <dbReference type="PROSITE-ProRule" id="PRU00111"/>
    </source>
</evidence>
<sequence>MKKITIYDLAELSGVSASAVSAILNGNWKKRRISAKLAEKVTRIAEEQGYAINRQASMLRSKKSHVIGMIIPKYDNRYFGSIAERFEEMARERGLLPIITCTRRRPELEIEAVKAMLSWQVDWVVATGATNPDKISALCQQAGVPTVNLDLPGSLSPSVISDNYGGAKALTHKILANSARRRGELAPLTFIGGRRATITPASVYAASTMRIASWGLACRRRIFWLPAIRKATLRTACRSGLAARRRCCRGYLLTRRYPWKGLCAGCRRWV</sequence>
<accession>P07760</accession>
<protein>
    <recommendedName>
        <fullName>Ribitol operon repressor</fullName>
        <shortName>Rbt operon repressor</shortName>
    </recommendedName>
</protein>
<reference key="1">
    <citation type="journal article" date="1985" name="EMBO J.">
        <title>Structure of wild-type and mutant repressors and of the control region of the rbt operon of Klebsiella aerogenes.</title>
        <authorList>
            <person name="Wu J.C."/>
            <person name="Anderton-Loviny T."/>
            <person name="Smith C.A."/>
            <person name="Hartley B.S."/>
        </authorList>
    </citation>
    <scope>NUCLEOTIDE SEQUENCE [GENOMIC DNA]</scope>
</reference>
<name>RBTR_KLEAE</name>
<comment type="function">
    <text>Repressor for the genes of the ribitol operon. Binds D-ribulose as an inducer.</text>
</comment>
<comment type="domain">
    <text>The C-terminal domain of this protein is probably involved in association of subunits consequent on ribitol binding.</text>
</comment>
<feature type="chain" id="PRO_0000107992" description="Ribitol operon repressor">
    <location>
        <begin position="1"/>
        <end position="270"/>
    </location>
</feature>
<feature type="domain" description="HTH lacI-type" evidence="1">
    <location>
        <begin position="1"/>
        <end position="61"/>
    </location>
</feature>
<feature type="DNA-binding region" description="H-T-H motif" evidence="1">
    <location>
        <begin position="6"/>
        <end position="25"/>
    </location>
</feature>
<gene>
    <name type="primary">rbtR</name>
</gene>
<proteinExistence type="predicted"/>
<dbReference type="EMBL" id="X02448">
    <property type="protein sequence ID" value="CAA26293.1"/>
    <property type="molecule type" value="Genomic_DNA"/>
</dbReference>
<dbReference type="SMR" id="P07760"/>
<dbReference type="STRING" id="548.EAG7_00525"/>
<dbReference type="GO" id="GO:0003700">
    <property type="term" value="F:DNA-binding transcription factor activity"/>
    <property type="evidence" value="ECO:0007669"/>
    <property type="project" value="TreeGrafter"/>
</dbReference>
<dbReference type="GO" id="GO:0000976">
    <property type="term" value="F:transcription cis-regulatory region binding"/>
    <property type="evidence" value="ECO:0007669"/>
    <property type="project" value="TreeGrafter"/>
</dbReference>
<dbReference type="CDD" id="cd01392">
    <property type="entry name" value="HTH_LacI"/>
    <property type="match status" value="1"/>
</dbReference>
<dbReference type="Gene3D" id="3.40.50.2300">
    <property type="match status" value="1"/>
</dbReference>
<dbReference type="Gene3D" id="1.10.260.40">
    <property type="entry name" value="lambda repressor-like DNA-binding domains"/>
    <property type="match status" value="1"/>
</dbReference>
<dbReference type="InterPro" id="IPR001387">
    <property type="entry name" value="Cro/C1-type_HTH"/>
</dbReference>
<dbReference type="InterPro" id="IPR000843">
    <property type="entry name" value="HTH_LacI"/>
</dbReference>
<dbReference type="InterPro" id="IPR010982">
    <property type="entry name" value="Lambda_DNA-bd_dom_sf"/>
</dbReference>
<dbReference type="InterPro" id="IPR001761">
    <property type="entry name" value="Peripla_BP/Lac1_sug-bd_dom"/>
</dbReference>
<dbReference type="InterPro" id="IPR028082">
    <property type="entry name" value="Peripla_BP_I"/>
</dbReference>
<dbReference type="PANTHER" id="PTHR30146:SF45">
    <property type="entry name" value="CATABOLITE REPRESSOR_ACTIVATOR"/>
    <property type="match status" value="1"/>
</dbReference>
<dbReference type="PANTHER" id="PTHR30146">
    <property type="entry name" value="LACI-RELATED TRANSCRIPTIONAL REPRESSOR"/>
    <property type="match status" value="1"/>
</dbReference>
<dbReference type="Pfam" id="PF00356">
    <property type="entry name" value="LacI"/>
    <property type="match status" value="1"/>
</dbReference>
<dbReference type="Pfam" id="PF00532">
    <property type="entry name" value="Peripla_BP_1"/>
    <property type="match status" value="1"/>
</dbReference>
<dbReference type="SMART" id="SM00354">
    <property type="entry name" value="HTH_LACI"/>
    <property type="match status" value="1"/>
</dbReference>
<dbReference type="SUPFAM" id="SSF47413">
    <property type="entry name" value="lambda repressor-like DNA-binding domains"/>
    <property type="match status" value="1"/>
</dbReference>
<dbReference type="SUPFAM" id="SSF53822">
    <property type="entry name" value="Periplasmic binding protein-like I"/>
    <property type="match status" value="1"/>
</dbReference>
<dbReference type="PROSITE" id="PS00356">
    <property type="entry name" value="HTH_LACI_1"/>
    <property type="match status" value="1"/>
</dbReference>
<dbReference type="PROSITE" id="PS50932">
    <property type="entry name" value="HTH_LACI_2"/>
    <property type="match status" value="1"/>
</dbReference>
<keyword id="KW-0238">DNA-binding</keyword>
<keyword id="KW-0678">Repressor</keyword>
<keyword id="KW-0804">Transcription</keyword>
<keyword id="KW-0805">Transcription regulation</keyword>
<organism>
    <name type="scientific">Klebsiella aerogenes</name>
    <name type="common">Enterobacter aerogenes</name>
    <dbReference type="NCBI Taxonomy" id="548"/>
    <lineage>
        <taxon>Bacteria</taxon>
        <taxon>Pseudomonadati</taxon>
        <taxon>Pseudomonadota</taxon>
        <taxon>Gammaproteobacteria</taxon>
        <taxon>Enterobacterales</taxon>
        <taxon>Enterobacteriaceae</taxon>
        <taxon>Klebsiella/Raoultella group</taxon>
        <taxon>Klebsiella</taxon>
    </lineage>
</organism>